<dbReference type="EC" id="1.3.5.1"/>
<dbReference type="EMBL" id="U31902">
    <property type="protein sequence ID" value="AAA75178.1"/>
    <property type="molecule type" value="Genomic_DNA"/>
</dbReference>
<dbReference type="PIR" id="T46881">
    <property type="entry name" value="T46881"/>
</dbReference>
<dbReference type="RefSeq" id="WP_011746917.1">
    <property type="nucleotide sequence ID" value="NZ_PPGA01000002.1"/>
</dbReference>
<dbReference type="SMR" id="Q59662"/>
<dbReference type="OMA" id="DGQYFGP"/>
<dbReference type="UniPathway" id="UPA00223">
    <property type="reaction ID" value="UER01005"/>
</dbReference>
<dbReference type="GO" id="GO:0051537">
    <property type="term" value="F:2 iron, 2 sulfur cluster binding"/>
    <property type="evidence" value="ECO:0007669"/>
    <property type="project" value="UniProtKB-KW"/>
</dbReference>
<dbReference type="GO" id="GO:0051538">
    <property type="term" value="F:3 iron, 4 sulfur cluster binding"/>
    <property type="evidence" value="ECO:0007669"/>
    <property type="project" value="UniProtKB-KW"/>
</dbReference>
<dbReference type="GO" id="GO:0051539">
    <property type="term" value="F:4 iron, 4 sulfur cluster binding"/>
    <property type="evidence" value="ECO:0007669"/>
    <property type="project" value="UniProtKB-KW"/>
</dbReference>
<dbReference type="GO" id="GO:0009055">
    <property type="term" value="F:electron transfer activity"/>
    <property type="evidence" value="ECO:0007669"/>
    <property type="project" value="InterPro"/>
</dbReference>
<dbReference type="GO" id="GO:0046872">
    <property type="term" value="F:metal ion binding"/>
    <property type="evidence" value="ECO:0007669"/>
    <property type="project" value="UniProtKB-KW"/>
</dbReference>
<dbReference type="GO" id="GO:0008177">
    <property type="term" value="F:succinate dehydrogenase (quinone) activity"/>
    <property type="evidence" value="ECO:0007669"/>
    <property type="project" value="UniProtKB-EC"/>
</dbReference>
<dbReference type="GO" id="GO:0022904">
    <property type="term" value="P:respiratory electron transport chain"/>
    <property type="evidence" value="ECO:0007669"/>
    <property type="project" value="TreeGrafter"/>
</dbReference>
<dbReference type="GO" id="GO:0006099">
    <property type="term" value="P:tricarboxylic acid cycle"/>
    <property type="evidence" value="ECO:0007669"/>
    <property type="project" value="UniProtKB-UniPathway"/>
</dbReference>
<dbReference type="CDD" id="cd00207">
    <property type="entry name" value="fer2"/>
    <property type="match status" value="1"/>
</dbReference>
<dbReference type="FunFam" id="3.10.20.30:FF:000007">
    <property type="entry name" value="Succinate dehydrogenase [ubiquinone] iron-sulfur subunit, mitochondrial"/>
    <property type="match status" value="1"/>
</dbReference>
<dbReference type="FunFam" id="1.10.1060.10:FF:000001">
    <property type="entry name" value="Succinate dehydrogenase iron-sulfur subunit SdhB"/>
    <property type="match status" value="1"/>
</dbReference>
<dbReference type="Gene3D" id="3.10.20.30">
    <property type="match status" value="1"/>
</dbReference>
<dbReference type="Gene3D" id="1.10.1060.10">
    <property type="entry name" value="Alpha-helical ferredoxin"/>
    <property type="match status" value="1"/>
</dbReference>
<dbReference type="InterPro" id="IPR036010">
    <property type="entry name" value="2Fe-2S_ferredoxin-like_sf"/>
</dbReference>
<dbReference type="InterPro" id="IPR001041">
    <property type="entry name" value="2Fe-2S_ferredoxin-type"/>
</dbReference>
<dbReference type="InterPro" id="IPR006058">
    <property type="entry name" value="2Fe2S_fd_BS"/>
</dbReference>
<dbReference type="InterPro" id="IPR017896">
    <property type="entry name" value="4Fe4S_Fe-S-bd"/>
</dbReference>
<dbReference type="InterPro" id="IPR017900">
    <property type="entry name" value="4Fe4S_Fe_S_CS"/>
</dbReference>
<dbReference type="InterPro" id="IPR012675">
    <property type="entry name" value="Beta-grasp_dom_sf"/>
</dbReference>
<dbReference type="InterPro" id="IPR009051">
    <property type="entry name" value="Helical_ferredxn"/>
</dbReference>
<dbReference type="InterPro" id="IPR050573">
    <property type="entry name" value="SDH/FRD_Iron-Sulfur"/>
</dbReference>
<dbReference type="InterPro" id="IPR004489">
    <property type="entry name" value="Succ_DH/fum_Rdtase_Fe-S"/>
</dbReference>
<dbReference type="InterPro" id="IPR025192">
    <property type="entry name" value="Succ_DH/fum_Rdtase_N"/>
</dbReference>
<dbReference type="NCBIfam" id="TIGR00384">
    <property type="entry name" value="dhsB"/>
    <property type="match status" value="1"/>
</dbReference>
<dbReference type="NCBIfam" id="NF004616">
    <property type="entry name" value="PRK05950.1"/>
    <property type="match status" value="1"/>
</dbReference>
<dbReference type="PANTHER" id="PTHR11921:SF29">
    <property type="entry name" value="SUCCINATE DEHYDROGENASE [UBIQUINONE] IRON-SULFUR SUBUNIT, MITOCHONDRIAL"/>
    <property type="match status" value="1"/>
</dbReference>
<dbReference type="PANTHER" id="PTHR11921">
    <property type="entry name" value="SUCCINATE DEHYDROGENASE IRON-SULFUR PROTEIN"/>
    <property type="match status" value="1"/>
</dbReference>
<dbReference type="Pfam" id="PF13085">
    <property type="entry name" value="Fer2_3"/>
    <property type="match status" value="1"/>
</dbReference>
<dbReference type="Pfam" id="PF13534">
    <property type="entry name" value="Fer4_17"/>
    <property type="match status" value="1"/>
</dbReference>
<dbReference type="SUPFAM" id="SSF54292">
    <property type="entry name" value="2Fe-2S ferredoxin-like"/>
    <property type="match status" value="1"/>
</dbReference>
<dbReference type="SUPFAM" id="SSF46548">
    <property type="entry name" value="alpha-helical ferredoxin"/>
    <property type="match status" value="1"/>
</dbReference>
<dbReference type="PROSITE" id="PS00197">
    <property type="entry name" value="2FE2S_FER_1"/>
    <property type="match status" value="1"/>
</dbReference>
<dbReference type="PROSITE" id="PS51085">
    <property type="entry name" value="2FE2S_FER_2"/>
    <property type="match status" value="1"/>
</dbReference>
<dbReference type="PROSITE" id="PS00198">
    <property type="entry name" value="4FE4S_FER_1"/>
    <property type="match status" value="1"/>
</dbReference>
<dbReference type="PROSITE" id="PS51379">
    <property type="entry name" value="4FE4S_FER_2"/>
    <property type="match status" value="1"/>
</dbReference>
<proteinExistence type="inferred from homology"/>
<organism>
    <name type="scientific">Paracoccus denitrificans</name>
    <dbReference type="NCBI Taxonomy" id="266"/>
    <lineage>
        <taxon>Bacteria</taxon>
        <taxon>Pseudomonadati</taxon>
        <taxon>Pseudomonadota</taxon>
        <taxon>Alphaproteobacteria</taxon>
        <taxon>Rhodobacterales</taxon>
        <taxon>Paracoccaceae</taxon>
        <taxon>Paracoccus</taxon>
    </lineage>
</organism>
<reference key="1">
    <citation type="submission" date="1995-09" db="EMBL/GenBank/DDBJ databases">
        <title>Cloning, sequencing, and expression of the succinate-ubiquinone oxidoreductase (SdhCDAB) operon from Paracoccus denitrificans.</title>
        <authorList>
            <person name="Dickins M.A."/>
            <person name="Dhawan T."/>
            <person name="Gunsalus R.P."/>
            <person name="Schroeder I."/>
            <person name="Cecchini G."/>
        </authorList>
    </citation>
    <scope>NUCLEOTIDE SEQUENCE [GENOMIC DNA]</scope>
    <source>
        <strain>ATCC 13543 / NRRL B-3784 / NRC 449</strain>
    </source>
</reference>
<protein>
    <recommendedName>
        <fullName>Succinate dehydrogenase iron-sulfur subunit</fullName>
        <ecNumber>1.3.5.1</ecNumber>
    </recommendedName>
</protein>
<name>SDHB_PARDE</name>
<evidence type="ECO:0000250" key="1"/>
<evidence type="ECO:0000255" key="2">
    <source>
        <dbReference type="PROSITE-ProRule" id="PRU00465"/>
    </source>
</evidence>
<evidence type="ECO:0000255" key="3">
    <source>
        <dbReference type="PROSITE-ProRule" id="PRU00711"/>
    </source>
</evidence>
<evidence type="ECO:0000305" key="4"/>
<comment type="catalytic activity">
    <reaction>
        <text>a quinone + succinate = fumarate + a quinol</text>
        <dbReference type="Rhea" id="RHEA:40523"/>
        <dbReference type="ChEBI" id="CHEBI:24646"/>
        <dbReference type="ChEBI" id="CHEBI:29806"/>
        <dbReference type="ChEBI" id="CHEBI:30031"/>
        <dbReference type="ChEBI" id="CHEBI:132124"/>
        <dbReference type="EC" id="1.3.5.1"/>
    </reaction>
</comment>
<comment type="cofactor">
    <cofactor evidence="1">
        <name>[2Fe-2S] cluster</name>
        <dbReference type="ChEBI" id="CHEBI:190135"/>
    </cofactor>
    <text evidence="1">Binds 1 [2Fe-2S] cluster.</text>
</comment>
<comment type="cofactor">
    <cofactor evidence="1">
        <name>[3Fe-4S] cluster</name>
        <dbReference type="ChEBI" id="CHEBI:21137"/>
    </cofactor>
    <text evidence="1">Binds 1 [3Fe-4S] cluster.</text>
</comment>
<comment type="cofactor">
    <cofactor evidence="1">
        <name>[4Fe-4S] cluster</name>
        <dbReference type="ChEBI" id="CHEBI:49883"/>
    </cofactor>
    <text evidence="1">Binds 1 [4Fe-4S] cluster.</text>
</comment>
<comment type="pathway">
    <text>Carbohydrate metabolism; tricarboxylic acid cycle; fumarate from succinate (bacterial route): step 1/1.</text>
</comment>
<comment type="subunit">
    <text>Part of an enzyme complex containing four subunits: a flavoprotein, an iron-sulfur, cytochrome b-556, and a hydrophobic anchor protein.</text>
</comment>
<comment type="similarity">
    <text evidence="4">Belongs to the succinate dehydrogenase/fumarate reductase iron-sulfur protein family.</text>
</comment>
<gene>
    <name type="primary">sdhB</name>
</gene>
<sequence length="259" mass="29551">MVQLTLPKNSRMRVGKTWPKPEGATNVRRFNIYRWDPDTGENPRIDTYFVDMDKCGPMVLDALIKIKNEIDPTLTFRRSCREGICGSCAMNIDGGNHLACIYGMDEIKGDVNIYPLPHMPVVKDLVPDLTHFYAQHASVQPYLITETPTPDKEWRQSIEDRKKLDGLYECVMCASCSTACPSYWWNGDRYLGPAALLHAYRWIIDSRDEATGERLDSLEDPFKLYRCHTIMNCTNTCPKGLNPAKAIASIKHMMVDRIV</sequence>
<feature type="chain" id="PRO_0000158689" description="Succinate dehydrogenase iron-sulfur subunit">
    <location>
        <begin position="1"/>
        <end position="259"/>
    </location>
</feature>
<feature type="domain" description="2Fe-2S ferredoxin-type" evidence="2">
    <location>
        <begin position="28"/>
        <end position="119"/>
    </location>
</feature>
<feature type="domain" description="4Fe-4S ferredoxin-type" evidence="3">
    <location>
        <begin position="160"/>
        <end position="190"/>
    </location>
</feature>
<feature type="binding site" evidence="1">
    <location>
        <position position="80"/>
    </location>
    <ligand>
        <name>[2Fe-2S] cluster</name>
        <dbReference type="ChEBI" id="CHEBI:190135"/>
    </ligand>
</feature>
<feature type="binding site" evidence="1">
    <location>
        <position position="85"/>
    </location>
    <ligand>
        <name>[2Fe-2S] cluster</name>
        <dbReference type="ChEBI" id="CHEBI:190135"/>
    </ligand>
</feature>
<feature type="binding site" evidence="1">
    <location>
        <position position="100"/>
    </location>
    <ligand>
        <name>[2Fe-2S] cluster</name>
        <dbReference type="ChEBI" id="CHEBI:190135"/>
    </ligand>
</feature>
<feature type="binding site" evidence="1">
    <location>
        <position position="170"/>
    </location>
    <ligand>
        <name>[4Fe-4S] cluster</name>
        <dbReference type="ChEBI" id="CHEBI:49883"/>
    </ligand>
</feature>
<feature type="binding site" evidence="1">
    <location>
        <position position="173"/>
    </location>
    <ligand>
        <name>[4Fe-4S] cluster</name>
        <dbReference type="ChEBI" id="CHEBI:49883"/>
    </ligand>
</feature>
<feature type="binding site" evidence="1">
    <location>
        <position position="176"/>
    </location>
    <ligand>
        <name>[4Fe-4S] cluster</name>
        <dbReference type="ChEBI" id="CHEBI:49883"/>
    </ligand>
</feature>
<feature type="binding site" evidence="1">
    <location>
        <position position="180"/>
    </location>
    <ligand>
        <name>[3Fe-4S] cluster</name>
        <dbReference type="ChEBI" id="CHEBI:21137"/>
    </ligand>
</feature>
<feature type="binding site" evidence="1">
    <location>
        <position position="185"/>
    </location>
    <ligand>
        <name>a ubiquinone</name>
        <dbReference type="ChEBI" id="CHEBI:16389"/>
        <note>ligand shared with SdhD subunit</note>
    </ligand>
</feature>
<feature type="binding site" evidence="1">
    <location>
        <position position="227"/>
    </location>
    <ligand>
        <name>[3Fe-4S] cluster</name>
        <dbReference type="ChEBI" id="CHEBI:21137"/>
    </ligand>
</feature>
<feature type="binding site" evidence="1">
    <location>
        <position position="233"/>
    </location>
    <ligand>
        <name>[3Fe-4S] cluster</name>
        <dbReference type="ChEBI" id="CHEBI:21137"/>
    </ligand>
</feature>
<feature type="binding site" evidence="1">
    <location>
        <position position="237"/>
    </location>
    <ligand>
        <name>[4Fe-4S] cluster</name>
        <dbReference type="ChEBI" id="CHEBI:49883"/>
    </ligand>
</feature>
<keyword id="KW-0001">2Fe-2S</keyword>
<keyword id="KW-0003">3Fe-4S</keyword>
<keyword id="KW-0004">4Fe-4S</keyword>
<keyword id="KW-0249">Electron transport</keyword>
<keyword id="KW-0408">Iron</keyword>
<keyword id="KW-0411">Iron-sulfur</keyword>
<keyword id="KW-0479">Metal-binding</keyword>
<keyword id="KW-0560">Oxidoreductase</keyword>
<keyword id="KW-0813">Transport</keyword>
<keyword id="KW-0816">Tricarboxylic acid cycle</keyword>
<accession>Q59662</accession>